<gene>
    <name type="primary">ttgE</name>
    <name type="synonym">sepb</name>
    <name type="ordered locus">T1E_4280</name>
</gene>
<reference key="1">
    <citation type="journal article" date="2000" name="J. Bacteriol.">
        <title>A set of genes encoding a second toluene efflux system in Pseudomonas putida DOT-T1 is linked to the tod genes for toluene metabolism.</title>
        <authorList>
            <person name="Mosqueda G."/>
            <person name="Ramos J.L."/>
        </authorList>
    </citation>
    <scope>NUCLEOTIDE SEQUENCE [GENOMIC DNA]</scope>
    <scope>INDUCTION</scope>
    <source>
        <strain>DOT-T1E</strain>
    </source>
</reference>
<reference key="2">
    <citation type="journal article" date="2001" name="Mol. Microbiol.">
        <title>Global and cognate regulators control the expression of the organic solvent efflux pumps TtgABC and TtgDEF of Pseudomonas putida.</title>
        <authorList>
            <person name="Duque E."/>
            <person name="Segura A."/>
            <person name="Mosqueda G."/>
            <person name="Ramos J.L."/>
        </authorList>
    </citation>
    <scope>NUCLEOTIDE SEQUENCE [GENOMIC DNA]</scope>
    <scope>INDUCTION</scope>
    <source>
        <strain>DOT-T1E</strain>
    </source>
</reference>
<reference key="3">
    <citation type="submission" date="2002-12" db="EMBL/GenBank/DDBJ databases">
        <authorList>
            <person name="Mosqueda G."/>
        </authorList>
    </citation>
    <scope>SEQUENCE REVISION</scope>
</reference>
<reference key="4">
    <citation type="submission" date="2010-09" db="EMBL/GenBank/DDBJ databases">
        <title>Global regulation of food supply by Pseudomonas putida DOT-T1E.</title>
        <authorList>
            <person name="Daniels C."/>
            <person name="Godoy P."/>
            <person name="Duque E."/>
            <person name="Molina-Henares M.A."/>
            <person name="de la Torre J."/>
            <person name="Del Arco J.M."/>
            <person name="Herrera C."/>
            <person name="Segura A."/>
            <person name="Guazzaroni M.E."/>
            <person name="Ferrer M."/>
            <person name="Ramos J.L."/>
        </authorList>
    </citation>
    <scope>NUCLEOTIDE SEQUENCE [GENOMIC DNA]</scope>
    <scope>SEQUENCE REVISION</scope>
    <source>
        <strain>DOT-T1E</strain>
    </source>
</reference>
<reference key="5">
    <citation type="journal article" date="2013" name="Microb. Biotechnol.">
        <title>Metabolic potential of the organic-solvent tolerant Pseudomonas putida DOT-T1E deduced from its annotated genome.</title>
        <authorList>
            <person name="Udaondo Z."/>
            <person name="Molina L."/>
            <person name="Daniels C."/>
            <person name="Gomez M.J."/>
            <person name="Molina-Henares M.A."/>
            <person name="Matilla M.A."/>
            <person name="Roca A."/>
            <person name="Fernandez M."/>
            <person name="Duque E."/>
            <person name="Segura A."/>
            <person name="Ramos J.L."/>
        </authorList>
    </citation>
    <scope>NUCLEOTIDE SEQUENCE [LARGE SCALE GENOMIC DNA]</scope>
    <source>
        <strain>DOT-T1E</strain>
    </source>
</reference>
<comment type="function">
    <text>The inner membrane transporter component of an inducible organic solvent efflux pump. Involved in export of toluene and styrene but not of m-xylene, propylbenzene or ethylbenzene. Is not involved in antibiotic or AMP efflux.</text>
</comment>
<comment type="subcellular location">
    <subcellularLocation>
        <location evidence="4">Cell inner membrane</location>
        <topology evidence="4">Multi-pass membrane protein</topology>
    </subcellularLocation>
</comment>
<comment type="induction">
    <text evidence="2 3">The ttgDEF operon is induced in the presence of toluene and styrene, but not m-xylene.</text>
</comment>
<comment type="similarity">
    <text evidence="4">Belongs to the resistance-nodulation-cell division (RND) (TC 2.A.6) family.</text>
</comment>
<evidence type="ECO:0000255" key="1"/>
<evidence type="ECO:0000269" key="2">
    <source>
    </source>
</evidence>
<evidence type="ECO:0000269" key="3">
    <source>
    </source>
</evidence>
<evidence type="ECO:0000305" key="4"/>
<proteinExistence type="evidence at transcript level"/>
<sequence length="1046" mass="113360">MSRFFIDRPIFAWVLAIIAMLAGALSLTKMPISQYPNIAAPAVSIQVVYPGASAKTVQDTVVQVIEQQLNGLDGFRYMAAESASDGSMNIIVTFEQGTNPDIAQVQVQNKLQLATPRLPEEVQRQGLRVVKYQMNFFMVVGLVDKTGKMTNFDLGNLIASQLQDPISRINGVGDFLLFGSPYAMRIWLDPGKLNSYQLTPGDVAQAIREQNVQVSSGQLGGLPTRSGVQLNATVVGKTRMTTPAEFEEILVKVKADGSQVRVKDLGRVVLASENFAISAKYRGQDSAGLGLRLASGGNLLETVKAVKAELEKQKAYLPEGVEVIYPYDTSPVVEASIDSVVHTILEAVVLVFLVMFLFLQSLRATIIPTLAVPVVLLAAFALLPYFGISINVLTMYAMVLAIGLLVDDAIVVVENVERLMHDEGLSPLEATRKSMGQISGALVGIGMVLSAVFVPMAFFGGSAGIIYKQFAVTIVICMSLSVLVALIFTPALCATILKAPENDAHHEKKGFFGWFNRSFDRNSARFERGVGGILKHRGRYLLIFALITAGTGYLFTQIPKAFLPSEDQGLMMTEVRMPLNASAERTEVVLQEVKDYLLKEEGQLVDHVMTVNGFNFAGRGQNSGLVLVVLKDWAARQAAGEDVLSVAERANARFARIKDATVMAFVPPAVLEMGNAMGFDLYLQDNLGLGHESLMAARNQFLELAAENPSLRAVRPNGKDDEPQFQVKIDDEKARALQVSIASINDTMSAAWGSMYVNDFIDLGRVKRVYIQGVDSSRIAPEDFDKWYVRNALGEMVPFSAFATGEWIHGSPKLERYGGISAVNILGEPAPGFSTGDAMIAIAQIMQQLPSGIGLSYNGLSYEEIRTGDQAPMLYALTVLIVFLCLAALYESWSVPMSVILVVPLGIFGAVLATLWRGLEADVYFQVGLMTTVGLSAKNAILIIEFAKELYEKEGVPLVKAAIEAARLRLRPIIMTSLAFTFGVLPMARATGAGAGSQHSIATGVVGGMITATVLAVFFVPLFYVVVVKVFERNKKPAALAEEELA</sequence>
<feature type="chain" id="PRO_0000161852" description="Toluene efflux pump membrane transporter TtgE">
    <location>
        <begin position="1"/>
        <end position="1046"/>
    </location>
</feature>
<feature type="transmembrane region" description="Helical" evidence="1">
    <location>
        <begin position="10"/>
        <end position="30"/>
    </location>
</feature>
<feature type="transmembrane region" description="Helical" evidence="1">
    <location>
        <begin position="339"/>
        <end position="359"/>
    </location>
</feature>
<feature type="transmembrane region" description="Helical" evidence="1">
    <location>
        <begin position="370"/>
        <end position="390"/>
    </location>
</feature>
<feature type="transmembrane region" description="Helical" evidence="1">
    <location>
        <begin position="392"/>
        <end position="412"/>
    </location>
</feature>
<feature type="transmembrane region" description="Helical" evidence="1">
    <location>
        <begin position="440"/>
        <end position="460"/>
    </location>
</feature>
<feature type="transmembrane region" description="Helical" evidence="1">
    <location>
        <begin position="470"/>
        <end position="490"/>
    </location>
</feature>
<feature type="transmembrane region" description="Helical" evidence="1">
    <location>
        <begin position="542"/>
        <end position="562"/>
    </location>
</feature>
<feature type="transmembrane region" description="Helical" evidence="1">
    <location>
        <begin position="871"/>
        <end position="891"/>
    </location>
</feature>
<feature type="transmembrane region" description="Helical" evidence="1">
    <location>
        <begin position="895"/>
        <end position="915"/>
    </location>
</feature>
<feature type="transmembrane region" description="Helical" evidence="1">
    <location>
        <begin position="927"/>
        <end position="947"/>
    </location>
</feature>
<feature type="transmembrane region" description="Helical" evidence="1">
    <location>
        <begin position="973"/>
        <end position="993"/>
    </location>
</feature>
<feature type="transmembrane region" description="Helical" evidence="1">
    <location>
        <begin position="1008"/>
        <end position="1028"/>
    </location>
</feature>
<keyword id="KW-0997">Cell inner membrane</keyword>
<keyword id="KW-1003">Cell membrane</keyword>
<keyword id="KW-0472">Membrane</keyword>
<keyword id="KW-0812">Transmembrane</keyword>
<keyword id="KW-1133">Transmembrane helix</keyword>
<keyword id="KW-0813">Transport</keyword>
<dbReference type="EMBL" id="GQ884177">
    <property type="protein sequence ID" value="ADI95409.1"/>
    <property type="molecule type" value="Genomic_DNA"/>
</dbReference>
<dbReference type="EMBL" id="CP003734">
    <property type="protein sequence ID" value="AFO50109.1"/>
    <property type="molecule type" value="Genomic_DNA"/>
</dbReference>
<dbReference type="RefSeq" id="WP_012052588.1">
    <property type="nucleotide sequence ID" value="NC_018220.1"/>
</dbReference>
<dbReference type="SMR" id="Q9KWV4"/>
<dbReference type="TCDB" id="2.A.6.2.10">
    <property type="family name" value="the resistance-nodulation-cell division (rnd) superfamily"/>
</dbReference>
<dbReference type="KEGG" id="ppx:T1E_4280"/>
<dbReference type="PATRIC" id="fig|1196325.3.peg.4237"/>
<dbReference type="HOGENOM" id="CLU_002755_0_1_6"/>
<dbReference type="Proteomes" id="UP000006503">
    <property type="component" value="Chromosome"/>
</dbReference>
<dbReference type="GO" id="GO:0005886">
    <property type="term" value="C:plasma membrane"/>
    <property type="evidence" value="ECO:0007669"/>
    <property type="project" value="UniProtKB-SubCell"/>
</dbReference>
<dbReference type="GO" id="GO:0015562">
    <property type="term" value="F:efflux transmembrane transporter activity"/>
    <property type="evidence" value="ECO:0007669"/>
    <property type="project" value="InterPro"/>
</dbReference>
<dbReference type="GO" id="GO:0042910">
    <property type="term" value="F:xenobiotic transmembrane transporter activity"/>
    <property type="evidence" value="ECO:0007669"/>
    <property type="project" value="TreeGrafter"/>
</dbReference>
<dbReference type="FunFam" id="1.20.1640.10:FF:000001">
    <property type="entry name" value="Efflux pump membrane transporter"/>
    <property type="match status" value="1"/>
</dbReference>
<dbReference type="FunFam" id="3.30.2090.10:FF:000002">
    <property type="entry name" value="Efflux pump membrane transporter"/>
    <property type="match status" value="1"/>
</dbReference>
<dbReference type="FunFam" id="3.30.70.1430:FF:000001">
    <property type="entry name" value="Efflux pump membrane transporter"/>
    <property type="match status" value="1"/>
</dbReference>
<dbReference type="FunFam" id="3.30.70.1430:FF:000002">
    <property type="entry name" value="Efflux pump membrane transporter"/>
    <property type="match status" value="1"/>
</dbReference>
<dbReference type="Gene3D" id="3.30.70.1430">
    <property type="entry name" value="Multidrug efflux transporter AcrB pore domain"/>
    <property type="match status" value="2"/>
</dbReference>
<dbReference type="Gene3D" id="3.30.70.1440">
    <property type="entry name" value="Multidrug efflux transporter AcrB pore domain"/>
    <property type="match status" value="1"/>
</dbReference>
<dbReference type="Gene3D" id="3.30.70.1320">
    <property type="entry name" value="Multidrug efflux transporter AcrB pore domain like"/>
    <property type="match status" value="1"/>
</dbReference>
<dbReference type="Gene3D" id="3.30.2090.10">
    <property type="entry name" value="Multidrug efflux transporter AcrB TolC docking domain, DN and DC subdomains"/>
    <property type="match status" value="2"/>
</dbReference>
<dbReference type="Gene3D" id="1.20.1640.10">
    <property type="entry name" value="Multidrug efflux transporter AcrB transmembrane domain"/>
    <property type="match status" value="2"/>
</dbReference>
<dbReference type="InterPro" id="IPR027463">
    <property type="entry name" value="AcrB_DN_DC_subdom"/>
</dbReference>
<dbReference type="InterPro" id="IPR001036">
    <property type="entry name" value="Acrflvin-R"/>
</dbReference>
<dbReference type="InterPro" id="IPR004764">
    <property type="entry name" value="MdtF-like"/>
</dbReference>
<dbReference type="NCBIfam" id="TIGR00915">
    <property type="entry name" value="2A0602"/>
    <property type="match status" value="1"/>
</dbReference>
<dbReference type="NCBIfam" id="NF000282">
    <property type="entry name" value="RND_permease_1"/>
    <property type="match status" value="1"/>
</dbReference>
<dbReference type="PANTHER" id="PTHR32063">
    <property type="match status" value="1"/>
</dbReference>
<dbReference type="PANTHER" id="PTHR32063:SF13">
    <property type="entry name" value="MULTIDRUG EFFLUX PUMP SUBUNIT ACRB-RELATED"/>
    <property type="match status" value="1"/>
</dbReference>
<dbReference type="Pfam" id="PF00873">
    <property type="entry name" value="ACR_tran"/>
    <property type="match status" value="1"/>
</dbReference>
<dbReference type="PRINTS" id="PR00702">
    <property type="entry name" value="ACRIFLAVINRP"/>
</dbReference>
<dbReference type="SUPFAM" id="SSF82693">
    <property type="entry name" value="Multidrug efflux transporter AcrB pore domain, PN1, PN2, PC1 and PC2 subdomains"/>
    <property type="match status" value="3"/>
</dbReference>
<dbReference type="SUPFAM" id="SSF82714">
    <property type="entry name" value="Multidrug efflux transporter AcrB TolC docking domain, DN and DC subdomains"/>
    <property type="match status" value="2"/>
</dbReference>
<dbReference type="SUPFAM" id="SSF82866">
    <property type="entry name" value="Multidrug efflux transporter AcrB transmembrane domain"/>
    <property type="match status" value="2"/>
</dbReference>
<protein>
    <recommendedName>
        <fullName>Toluene efflux pump membrane transporter TtgE</fullName>
    </recommendedName>
</protein>
<organism>
    <name type="scientific">Pseudomonas putida (strain DOT-T1E)</name>
    <dbReference type="NCBI Taxonomy" id="1196325"/>
    <lineage>
        <taxon>Bacteria</taxon>
        <taxon>Pseudomonadati</taxon>
        <taxon>Pseudomonadota</taxon>
        <taxon>Gammaproteobacteria</taxon>
        <taxon>Pseudomonadales</taxon>
        <taxon>Pseudomonadaceae</taxon>
        <taxon>Pseudomonas</taxon>
    </lineage>
</organism>
<name>TTGE_PSEPT</name>
<accession>Q9KWV4</accession>
<accession>E0X9D0</accession>
<accession>I7CDZ6</accession>